<proteinExistence type="evidence at transcript level"/>
<name>MXI1_DANRE</name>
<dbReference type="EMBL" id="U10638">
    <property type="protein sequence ID" value="AAA19324.1"/>
    <property type="molecule type" value="mRNA"/>
</dbReference>
<dbReference type="SMR" id="P50541"/>
<dbReference type="FunCoup" id="P50541">
    <property type="interactions" value="203"/>
</dbReference>
<dbReference type="STRING" id="7955.ENSDARP00000095521"/>
<dbReference type="PaxDb" id="7955-ENSDARP00000095521"/>
<dbReference type="AGR" id="ZFIN:ZDB-GENE-990415-151"/>
<dbReference type="ZFIN" id="ZDB-GENE-990415-151">
    <property type="gene designation" value="mxi1"/>
</dbReference>
<dbReference type="eggNOG" id="KOG2483">
    <property type="taxonomic scope" value="Eukaryota"/>
</dbReference>
<dbReference type="InParanoid" id="P50541"/>
<dbReference type="PRO" id="PR:P50541"/>
<dbReference type="Proteomes" id="UP000000437">
    <property type="component" value="Unplaced"/>
</dbReference>
<dbReference type="GO" id="GO:0005634">
    <property type="term" value="C:nucleus"/>
    <property type="evidence" value="ECO:0007669"/>
    <property type="project" value="UniProtKB-SubCell"/>
</dbReference>
<dbReference type="GO" id="GO:0000981">
    <property type="term" value="F:DNA-binding transcription factor activity, RNA polymerase II-specific"/>
    <property type="evidence" value="ECO:0000318"/>
    <property type="project" value="GO_Central"/>
</dbReference>
<dbReference type="GO" id="GO:0046983">
    <property type="term" value="F:protein dimerization activity"/>
    <property type="evidence" value="ECO:0007669"/>
    <property type="project" value="InterPro"/>
</dbReference>
<dbReference type="GO" id="GO:0000978">
    <property type="term" value="F:RNA polymerase II cis-regulatory region sequence-specific DNA binding"/>
    <property type="evidence" value="ECO:0000318"/>
    <property type="project" value="GO_Central"/>
</dbReference>
<dbReference type="GO" id="GO:0006357">
    <property type="term" value="P:regulation of transcription by RNA polymerase II"/>
    <property type="evidence" value="ECO:0000318"/>
    <property type="project" value="GO_Central"/>
</dbReference>
<dbReference type="CDD" id="cd18930">
    <property type="entry name" value="bHLHzip_MXI1"/>
    <property type="match status" value="1"/>
</dbReference>
<dbReference type="Gene3D" id="4.10.280.10">
    <property type="entry name" value="Helix-loop-helix DNA-binding domain"/>
    <property type="match status" value="1"/>
</dbReference>
<dbReference type="InterPro" id="IPR011598">
    <property type="entry name" value="bHLH_dom"/>
</dbReference>
<dbReference type="InterPro" id="IPR036638">
    <property type="entry name" value="HLH_DNA-bd_sf"/>
</dbReference>
<dbReference type="PANTHER" id="PTHR11969">
    <property type="entry name" value="MAX DIMERIZATION, MAD"/>
    <property type="match status" value="1"/>
</dbReference>
<dbReference type="PANTHER" id="PTHR11969:SF13">
    <property type="entry name" value="MAX-INTERACTING PROTEIN 1"/>
    <property type="match status" value="1"/>
</dbReference>
<dbReference type="Pfam" id="PF00010">
    <property type="entry name" value="HLH"/>
    <property type="match status" value="1"/>
</dbReference>
<dbReference type="SMART" id="SM00353">
    <property type="entry name" value="HLH"/>
    <property type="match status" value="1"/>
</dbReference>
<dbReference type="SUPFAM" id="SSF47459">
    <property type="entry name" value="HLH, helix-loop-helix DNA-binding domain"/>
    <property type="match status" value="1"/>
</dbReference>
<dbReference type="PROSITE" id="PS50888">
    <property type="entry name" value="BHLH"/>
    <property type="match status" value="1"/>
</dbReference>
<reference key="1">
    <citation type="journal article" date="1994" name="Oncogene">
        <title>Evolutionary relationships and functional conservation among vertebrate Max-associated proteins: the zebra fish homolog of Mxi1.</title>
        <authorList>
            <person name="Schreiber-Agus N."/>
            <person name="Chin L."/>
            <person name="Chen K."/>
            <person name="Torres R."/>
            <person name="Thomson C.T."/>
            <person name="Sacchettini J.C."/>
            <person name="DePinho R.A."/>
        </authorList>
    </citation>
    <scope>NUCLEOTIDE SEQUENCE [MRNA]</scope>
</reference>
<gene>
    <name type="primary">mxi1</name>
</gene>
<accession>P50541</accession>
<organism>
    <name type="scientific">Danio rerio</name>
    <name type="common">Zebrafish</name>
    <name type="synonym">Brachydanio rerio</name>
    <dbReference type="NCBI Taxonomy" id="7955"/>
    <lineage>
        <taxon>Eukaryota</taxon>
        <taxon>Metazoa</taxon>
        <taxon>Chordata</taxon>
        <taxon>Craniata</taxon>
        <taxon>Vertebrata</taxon>
        <taxon>Euteleostomi</taxon>
        <taxon>Actinopterygii</taxon>
        <taxon>Neopterygii</taxon>
        <taxon>Teleostei</taxon>
        <taxon>Ostariophysi</taxon>
        <taxon>Cypriniformes</taxon>
        <taxon>Danionidae</taxon>
        <taxon>Danioninae</taxon>
        <taxon>Danio</taxon>
    </lineage>
</organism>
<keyword id="KW-0238">DNA-binding</keyword>
<keyword id="KW-0539">Nucleus</keyword>
<keyword id="KW-1185">Reference proteome</keyword>
<keyword id="KW-0678">Repressor</keyword>
<keyword id="KW-0804">Transcription</keyword>
<keyword id="KW-0805">Transcription regulation</keyword>
<comment type="function">
    <text>Transcriptional repressor. MXI1 binds with MAX to form a sequence-specific DNA-binding protein complex which recognizes the core sequence 5'-CAC[GA]TG-3'. MXI1 thus antagonizes MYC transcriptional activity by competing for MAX.</text>
</comment>
<comment type="subunit">
    <text>Efficient DNA binding requires dimerization with another bHLH protein. Binds DNA as a heterodimer with MAX.</text>
</comment>
<comment type="subcellular location">
    <subcellularLocation>
        <location>Nucleus</location>
    </subcellularLocation>
</comment>
<comment type="developmental stage">
    <text>Barely detectable during early stages of active growth and differentiation, exhibits dramatic increase between 30 and 48 hours of development. This late embryonic stage marks a period of continued maturation and moderate growth of most organs, but is also characterized by initiation of cellular growth arrest and terminal differentiation in many cell types.</text>
</comment>
<protein>
    <recommendedName>
        <fullName>Max-interacting protein 1</fullName>
        <shortName>Max interactor 1</shortName>
    </recommendedName>
</protein>
<sequence length="243" mass="27643">MSTCPFNDVFNSTDSSMINTFLKNVQVLLEAASYIESAERKDGKCEHGYASTFPSIQHSSYQRQRKFRNKKCNNNHYRSTHNELEKNRRAHLRLCLERLKTLIPLGPECSRHTTLGLLNKAKAHIKKLEEADRKSRYQLESLEREQRHLRRRLDLLRDGGGSLEAERIRTDSMGSTPCSERSDRSDSDQEEMEVDVESTEFSHGELDSVSTASTSDLDDHSSLQSTASDEGYSSCSIKLAFSS</sequence>
<feature type="chain" id="PRO_0000127288" description="Max-interacting protein 1">
    <location>
        <begin position="1"/>
        <end position="243"/>
    </location>
</feature>
<feature type="domain" description="bHLH" evidence="1">
    <location>
        <begin position="76"/>
        <end position="128"/>
    </location>
</feature>
<feature type="region of interest" description="Disordered" evidence="2">
    <location>
        <begin position="164"/>
        <end position="235"/>
    </location>
</feature>
<feature type="compositionally biased region" description="Acidic residues" evidence="2">
    <location>
        <begin position="188"/>
        <end position="198"/>
    </location>
</feature>
<feature type="compositionally biased region" description="Polar residues" evidence="2">
    <location>
        <begin position="222"/>
        <end position="235"/>
    </location>
</feature>
<evidence type="ECO:0000255" key="1">
    <source>
        <dbReference type="PROSITE-ProRule" id="PRU00981"/>
    </source>
</evidence>
<evidence type="ECO:0000256" key="2">
    <source>
        <dbReference type="SAM" id="MobiDB-lite"/>
    </source>
</evidence>